<proteinExistence type="inferred from homology"/>
<gene>
    <name evidence="1" type="primary">HA</name>
</gene>
<keyword id="KW-1167">Clathrin- and caveolin-independent endocytosis of virus by host</keyword>
<keyword id="KW-1165">Clathrin-mediated endocytosis of virus by host</keyword>
<keyword id="KW-1015">Disulfide bond</keyword>
<keyword id="KW-1170">Fusion of virus membrane with host endosomal membrane</keyword>
<keyword id="KW-1168">Fusion of virus membrane with host membrane</keyword>
<keyword id="KW-0325">Glycoprotein</keyword>
<keyword id="KW-0348">Hemagglutinin</keyword>
<keyword id="KW-1032">Host cell membrane</keyword>
<keyword id="KW-1043">Host membrane</keyword>
<keyword id="KW-0945">Host-virus interaction</keyword>
<keyword id="KW-0449">Lipoprotein</keyword>
<keyword id="KW-0472">Membrane</keyword>
<keyword id="KW-0564">Palmitate</keyword>
<keyword id="KW-0732">Signal</keyword>
<keyword id="KW-0812">Transmembrane</keyword>
<keyword id="KW-1133">Transmembrane helix</keyword>
<keyword id="KW-1161">Viral attachment to host cell</keyword>
<keyword id="KW-0261">Viral envelope protein</keyword>
<keyword id="KW-1162">Viral penetration into host cytoplasm</keyword>
<keyword id="KW-0946">Virion</keyword>
<keyword id="KW-1164">Virus endocytosis by host</keyword>
<keyword id="KW-1160">Virus entry into host cell</keyword>
<dbReference type="EMBL" id="X62560">
    <property type="protein sequence ID" value="CAA44437.1"/>
    <property type="molecule type" value="Genomic_RNA"/>
</dbReference>
<dbReference type="EMBL" id="M58657">
    <property type="protein sequence ID" value="AAA43174.1"/>
    <property type="molecule type" value="Genomic_RNA"/>
</dbReference>
<dbReference type="PIR" id="S22017">
    <property type="entry name" value="S22017"/>
</dbReference>
<dbReference type="SMR" id="P26099"/>
<dbReference type="GlyCosmos" id="P26099">
    <property type="glycosylation" value="5 sites, No reported glycans"/>
</dbReference>
<dbReference type="GO" id="GO:0020002">
    <property type="term" value="C:host cell plasma membrane"/>
    <property type="evidence" value="ECO:0007669"/>
    <property type="project" value="UniProtKB-SubCell"/>
</dbReference>
<dbReference type="GO" id="GO:0016020">
    <property type="term" value="C:membrane"/>
    <property type="evidence" value="ECO:0007669"/>
    <property type="project" value="UniProtKB-UniRule"/>
</dbReference>
<dbReference type="GO" id="GO:0019031">
    <property type="term" value="C:viral envelope"/>
    <property type="evidence" value="ECO:0007669"/>
    <property type="project" value="UniProtKB-UniRule"/>
</dbReference>
<dbReference type="GO" id="GO:0055036">
    <property type="term" value="C:virion membrane"/>
    <property type="evidence" value="ECO:0007669"/>
    <property type="project" value="UniProtKB-SubCell"/>
</dbReference>
<dbReference type="GO" id="GO:0046789">
    <property type="term" value="F:host cell surface receptor binding"/>
    <property type="evidence" value="ECO:0007669"/>
    <property type="project" value="UniProtKB-UniRule"/>
</dbReference>
<dbReference type="GO" id="GO:0075512">
    <property type="term" value="P:clathrin-dependent endocytosis of virus by host cell"/>
    <property type="evidence" value="ECO:0007669"/>
    <property type="project" value="UniProtKB-UniRule"/>
</dbReference>
<dbReference type="GO" id="GO:0039654">
    <property type="term" value="P:fusion of virus membrane with host endosome membrane"/>
    <property type="evidence" value="ECO:0007669"/>
    <property type="project" value="UniProtKB-UniRule"/>
</dbReference>
<dbReference type="GO" id="GO:0019064">
    <property type="term" value="P:fusion of virus membrane with host plasma membrane"/>
    <property type="evidence" value="ECO:0007669"/>
    <property type="project" value="InterPro"/>
</dbReference>
<dbReference type="GO" id="GO:0046761">
    <property type="term" value="P:viral budding from plasma membrane"/>
    <property type="evidence" value="ECO:0007669"/>
    <property type="project" value="UniProtKB-UniRule"/>
</dbReference>
<dbReference type="GO" id="GO:0019062">
    <property type="term" value="P:virion attachment to host cell"/>
    <property type="evidence" value="ECO:0007669"/>
    <property type="project" value="UniProtKB-KW"/>
</dbReference>
<dbReference type="Gene3D" id="3.90.20.10">
    <property type="match status" value="1"/>
</dbReference>
<dbReference type="Gene3D" id="3.90.209.20">
    <property type="match status" value="1"/>
</dbReference>
<dbReference type="HAMAP" id="MF_04072">
    <property type="entry name" value="INFV_HEMA"/>
    <property type="match status" value="1"/>
</dbReference>
<dbReference type="InterPro" id="IPR008980">
    <property type="entry name" value="Capsid_hemagglutn"/>
</dbReference>
<dbReference type="InterPro" id="IPR013828">
    <property type="entry name" value="Hemagglutn_HA1_a/b_dom_sf"/>
</dbReference>
<dbReference type="InterPro" id="IPR000149">
    <property type="entry name" value="Hemagglutn_influenz_A"/>
</dbReference>
<dbReference type="InterPro" id="IPR001364">
    <property type="entry name" value="Hemagglutn_influenz_A/B"/>
</dbReference>
<dbReference type="Pfam" id="PF00509">
    <property type="entry name" value="Hemagglutinin"/>
    <property type="match status" value="1"/>
</dbReference>
<dbReference type="PRINTS" id="PR00330">
    <property type="entry name" value="HEMAGGLUTN1"/>
</dbReference>
<dbReference type="PRINTS" id="PR00329">
    <property type="entry name" value="HEMAGGLUTN12"/>
</dbReference>
<dbReference type="SUPFAM" id="SSF58064">
    <property type="entry name" value="Influenza hemagglutinin (stalk)"/>
    <property type="match status" value="1"/>
</dbReference>
<dbReference type="SUPFAM" id="SSF49818">
    <property type="entry name" value="Viral protein domain"/>
    <property type="match status" value="1"/>
</dbReference>
<organismHost>
    <name type="scientific">Aves</name>
    <dbReference type="NCBI Taxonomy" id="8782"/>
</organismHost>
<organismHost>
    <name type="scientific">Equus caballus</name>
    <name type="common">Horse</name>
    <dbReference type="NCBI Taxonomy" id="9796"/>
</organismHost>
<organismHost>
    <name type="scientific">Homo sapiens</name>
    <name type="common">Human</name>
    <dbReference type="NCBI Taxonomy" id="9606"/>
</organismHost>
<organismHost>
    <name type="scientific">Phocidae</name>
    <name type="common">true seals</name>
    <dbReference type="NCBI Taxonomy" id="9709"/>
</organismHost>
<feature type="signal peptide" evidence="1">
    <location>
        <begin position="1"/>
        <end position="18"/>
    </location>
</feature>
<feature type="chain" id="PRO_0000440435" description="Hemagglutinin" evidence="1">
    <location>
        <begin position="19"/>
        <end position="570"/>
    </location>
</feature>
<feature type="chain" id="PRO_0000038984" description="Hemagglutinin HA1 chain" evidence="1">
    <location>
        <begin position="19"/>
        <end position="348"/>
    </location>
</feature>
<feature type="chain" id="PRO_0000038985" description="Hemagglutinin HA2 chain" evidence="1">
    <location>
        <begin position="350"/>
        <end position="570"/>
    </location>
</feature>
<feature type="topological domain" description="Extracellular" evidence="1">
    <location>
        <begin position="19"/>
        <end position="533"/>
    </location>
</feature>
<feature type="transmembrane region" description="Helical" evidence="1">
    <location>
        <begin position="534"/>
        <end position="554"/>
    </location>
</feature>
<feature type="topological domain" description="Cytoplasmic" evidence="1">
    <location>
        <begin position="555"/>
        <end position="570"/>
    </location>
</feature>
<feature type="site" description="Cleavage; by host" evidence="1">
    <location>
        <begin position="349"/>
        <end position="350"/>
    </location>
</feature>
<feature type="lipid moiety-binding region" description="S-palmitoyl cysteine; by host" evidence="1">
    <location>
        <position position="566"/>
    </location>
</feature>
<feature type="lipid moiety-binding region" description="S-palmitoyl cysteine; by host" evidence="1">
    <location>
        <position position="569"/>
    </location>
</feature>
<feature type="glycosylation site" description="N-linked (GlcNAc...) asparagine; by host" evidence="1">
    <location>
        <position position="46"/>
    </location>
</feature>
<feature type="glycosylation site" description="N-linked (GlcNAc...) asparagine; by host" evidence="1">
    <location>
        <position position="249"/>
    </location>
</feature>
<feature type="glycosylation site" description="N-linked (GlcNAc...) asparagine; by host" evidence="1">
    <location>
        <position position="335"/>
    </location>
</feature>
<feature type="glycosylation site" description="N-linked (GlcNAc...) asparagine; by host" evidence="1">
    <location>
        <position position="431"/>
    </location>
</feature>
<feature type="glycosylation site" description="N-linked (GlcNAc...) asparagine; by host" evidence="1">
    <location>
        <position position="503"/>
    </location>
</feature>
<feature type="disulfide bond" description="Interchain (between HA1 and HA2 chains)" evidence="1">
    <location>
        <begin position="22"/>
        <end position="486"/>
    </location>
</feature>
<feature type="disulfide bond" evidence="1">
    <location>
        <begin position="60"/>
        <end position="286"/>
    </location>
</feature>
<feature type="disulfide bond" evidence="1">
    <location>
        <begin position="72"/>
        <end position="84"/>
    </location>
</feature>
<feature type="disulfide bond" evidence="1">
    <location>
        <begin position="105"/>
        <end position="147"/>
    </location>
</feature>
<feature type="disulfide bond" evidence="1">
    <location>
        <begin position="290"/>
        <end position="314"/>
    </location>
</feature>
<feature type="disulfide bond" evidence="1">
    <location>
        <begin position="493"/>
        <end position="497"/>
    </location>
</feature>
<feature type="sequence conflict" description="In Ref. 2; AAA43174." evidence="2" ref="2">
    <original>N</original>
    <variation>D</variation>
    <location>
        <position position="141"/>
    </location>
</feature>
<feature type="sequence conflict" description="In Ref. 2; AAA43174." evidence="2" ref="2">
    <original>N</original>
    <variation>S</variation>
    <location>
        <position position="225"/>
    </location>
</feature>
<reference key="1">
    <citation type="journal article" date="1992" name="Virus Res.">
        <title>Sequence analysis of the equine H7 influenza virus haemagglutinin gene.</title>
        <authorList>
            <person name="Gibson C.A."/>
            <person name="Daniels R.S."/>
            <person name="Oxford J.S."/>
            <person name="McCauley J.W."/>
        </authorList>
    </citation>
    <scope>NUCLEOTIDE SEQUENCE [GENOMIC RNA]</scope>
</reference>
<reference key="2">
    <citation type="journal article" date="1991" name="Virology">
        <title>Reassortants with equine 1 (H7N7) influenza virus hemagglutinin in an avian influenza virus genetic background are pathogenic in chickens.</title>
        <authorList>
            <person name="Banbura M.W."/>
            <person name="Kawaoka Y."/>
            <person name="Thomas T.L."/>
            <person name="Webster R.G."/>
        </authorList>
    </citation>
    <scope>NUCLEOTIDE SEQUENCE [GENOMIC RNA]</scope>
</reference>
<accession>P26099</accession>
<accession>Q67108</accession>
<comment type="function">
    <text>Binds to sialic acid-containing receptors on the cell surface, bringing about the attachment of the virus particle to the cell. This attachment induces virion internalization of about two third of the virus particles through clathrin-dependent endocytosis and about one third through a clathrin- and caveolin-independent pathway. Plays a major role in the determination of host range restriction and virulence. Class I viral fusion protein. Responsible for penetration of the virus into the cell cytoplasm by mediating the fusion of the membrane of the endocytosed virus particle with the endosomal membrane. Low pH in endosomes induces an irreversible conformational change in HA2, releasing the fusion hydrophobic peptide. Several trimers are required to form a competent fusion pore.</text>
</comment>
<comment type="function">
    <text evidence="1">Binds to sialic acid-containing receptors on the cell surface, bringing about the attachment of the virus particle to the cell. This attachment induces virion internalization either through clathrin-dependent endocytosis or through clathrin- and caveolin-independent pathway. Plays a major role in the determination of host range restriction and virulence. Class I viral fusion protein. Responsible for penetration of the virus into the cell cytoplasm by mediating the fusion of the membrane of the endocytosed virus particle with the endosomal membrane. Low pH in endosomes induces an irreversible conformational change in HA2, releasing the fusion hydrophobic peptide. Several trimers are required to form a competent fusion pore.</text>
</comment>
<comment type="subunit">
    <text evidence="1">Homotrimer of disulfide-linked HA1-HA2.</text>
</comment>
<comment type="subcellular location">
    <subcellularLocation>
        <location evidence="1">Virion membrane</location>
        <topology evidence="1">Single-pass type I membrane protein</topology>
    </subcellularLocation>
    <subcellularLocation>
        <location evidence="1">Host apical cell membrane</location>
        <topology evidence="1">Single-pass type I membrane protein</topology>
    </subcellularLocation>
    <text evidence="1">Targeted to the apical plasma membrane in epithelial polarized cells through a signal present in the transmembrane domain. Associated with glycosphingolipid- and cholesterol-enriched detergent-resistant lipid rafts.</text>
</comment>
<comment type="PTM">
    <text evidence="1">Palmitoylated.</text>
</comment>
<comment type="PTM">
    <text evidence="1">In natural infection, inactive HA is matured into HA1 and HA2 outside the cell by one or more trypsin-like, arginine-specific endoprotease secreted by the bronchial epithelial cells. One identified protease that may be involved in this process is secreted in lungs by club cells.</text>
</comment>
<comment type="miscellaneous">
    <text>Major glycoprotein, comprises over 80% of the envelope proteins present in virus particle.</text>
</comment>
<comment type="miscellaneous">
    <text>The extent of infection into host organism is determined by HA. Influenza viruses bud from the apical surface of polarized epithelial cells (e.g. bronchial epithelial cells) into lumen of lungs and are therefore usually pneumotropic. The reason is that HA is cleaved by tryptase clara which is restricted to lungs. However, HAs of H5 and H7 pantropic avian viruses subtypes can be cleaved by furin and subtilisin-type enzymes, allowing the virus to grow in other organs than lungs.</text>
</comment>
<comment type="miscellaneous">
    <text evidence="2">The influenza A genome consist of 8 RNA segments. Genetic variation of hemagglutinin and/or neuraminidase genes results in the emergence of new influenza strains. The mechanism of variation can be the result of point mutations or the result of genetic reassortment between segments of two different strains.</text>
</comment>
<comment type="similarity">
    <text evidence="1">Belongs to the influenza viruses hemagglutinin family.</text>
</comment>
<name>HEMA_I73A4</name>
<protein>
    <recommendedName>
        <fullName evidence="1">Hemagglutinin</fullName>
    </recommendedName>
    <component>
        <recommendedName>
            <fullName evidence="1">Hemagglutinin HA1 chain</fullName>
        </recommendedName>
    </component>
    <component>
        <recommendedName>
            <fullName evidence="1">Hemagglutinin HA2 chain</fullName>
        </recommendedName>
    </component>
</protein>
<evidence type="ECO:0000255" key="1">
    <source>
        <dbReference type="HAMAP-Rule" id="MF_04072"/>
    </source>
</evidence>
<evidence type="ECO:0000305" key="2"/>
<sequence>MNTQILILAISAFLCVRADKICLGHHAVSNGIKVDTLTEKGIEVVNATETVEQKNIPKICSKGKQTIDLGQCGLLGTTIGPPQCDQFLEFSANLIIERREGDDICYPGKFDNEETLRKILRKSGGIKKENMGFTYTGVRTNGETSACRRSRSSFYAEMKWLLSNTDNGVFPQMTKSYKNTKREPALIIWGIHHSGSTAEQTRLYGSGNKLITVWSSKYQQSFAPNPGPRPQINGQSGRIDFYWLMLDPNDTVTFSFNGAFIAPDRASFLRGKSLGIQSDAQLDNNCEGECYHIGGTIISNLPFQNINSRAIGKCPRYVKQKSLMLATGMKNVPENSTHKQLTHHMRKKRGLFGAIAGFIENGWEGLIDGWYGYRHQNAQGEGTAADYKSTQSAINQITGKLNRLIEKTNQQFELIDNEFNEIEKQIGNVINWTRDSIIEVWSYNAEFLVAVENQHTIDLTDSEMNKLYEKVRRQLRENAEEDGNGCFEIFHQCDNDCMASIRNNTYDHKKYRKEAIQNRIQIDAVKLSSGYKDIILWFSFGASCFLFLAIAMVLAFICIKNGNMRCTICI</sequence>
<organism>
    <name type="scientific">Influenza A virus (strain A/Equine/London/1416/1973 H7N7)</name>
    <dbReference type="NCBI Taxonomy" id="380340"/>
    <lineage>
        <taxon>Viruses</taxon>
        <taxon>Riboviria</taxon>
        <taxon>Orthornavirae</taxon>
        <taxon>Negarnaviricota</taxon>
        <taxon>Polyploviricotina</taxon>
        <taxon>Insthoviricetes</taxon>
        <taxon>Articulavirales</taxon>
        <taxon>Orthomyxoviridae</taxon>
        <taxon>Alphainfluenzavirus</taxon>
        <taxon>Alphainfluenzavirus influenzae</taxon>
        <taxon>Influenza A virus</taxon>
    </lineage>
</organism>